<reference key="1">
    <citation type="submission" date="2005-09" db="EMBL/GenBank/DDBJ databases">
        <title>Complete sequence of chromosome 1 of Rhodobacter sphaeroides 2.4.1.</title>
        <authorList>
            <person name="Copeland A."/>
            <person name="Lucas S."/>
            <person name="Lapidus A."/>
            <person name="Barry K."/>
            <person name="Detter J.C."/>
            <person name="Glavina T."/>
            <person name="Hammon N."/>
            <person name="Israni S."/>
            <person name="Pitluck S."/>
            <person name="Richardson P."/>
            <person name="Mackenzie C."/>
            <person name="Choudhary M."/>
            <person name="Larimer F."/>
            <person name="Hauser L.J."/>
            <person name="Land M."/>
            <person name="Donohue T.J."/>
            <person name="Kaplan S."/>
        </authorList>
    </citation>
    <scope>NUCLEOTIDE SEQUENCE [LARGE SCALE GENOMIC DNA]</scope>
    <source>
        <strain>ATCC 17023 / DSM 158 / JCM 6121 / CCUG 31486 / LMG 2827 / NBRC 12203 / NCIMB 8253 / ATH 2.4.1.</strain>
    </source>
</reference>
<sequence>MPSLNDIRSTFLDYFRRNGHRVVESSPLVPRNDPTLMFTNSGMVQFKNCFTGLEHRDYTRATTAQKCVRAGGKHNDLDNVGYTARHHTFFEMLGNFSFGDYFKSDAIPFAWELLTKDFDIPKEKLLVTVYHTDDEAAEIWKKVAGLPDERIIRIPTNDNFWMMGPTGPCGPCTEIFFDHGPSIWGGPPGSADEDGDRFIEIWNLVFMQNEQHPDGSMTPLPKQSIDTGMGLERIGALLQGKHDNYDTDLMRSLIEASAHATSTDPDGPGKTHHRVIADHLRSTSFLIADGVMPSNEGRGYVLRRIMRRAMRHAHLLGAQDPVMHRLVPALVRQMGAAYPELTRGQALIEETLKLEETRFRQTLERGLRLLEDELGHLPEGSPLPGEAAFKLYDTYGFPLDLTQDALREKGRKVDVEGFEAAMAEQKAKARASWSGSGETKDAAIWFDLAETHGATEFLGYDTEQAEGQVLALVAAGAETASAGAGQTVQIILNQTPFYAESGGQVGDTGELRTDTGRARITDVKKGQGLFLHFAEVVEGEIRQGQGATLVVDHARRSAIRANHSATHLLHEALRRALGDHVAQRGSLNAPDRLRFDFSHSRALSPEELAAVEAEVNGFIRSNGAVETRIMSPDDARALGAQALFGEKYGDEVRVVSMGTLAGSGKGTDGQTYSLELCGGTHVSRLGDIGLCVILGDSASSAGVRRIEALTGEGALAYLNEQMKRLTDVAAALKAAPAELVDRVKALVEERRQLQNEVAQLRREAAMGGGAASEAKEIGGVKFLAQVVQGVPGKDMPGLIDEMKARVGSGAVLLISDTGGKAALAAGVTPDLTDRLSAVTLVKAAAEALGGRGGGGRPDMAQAGAADASQADAAIRAAEAVMGG</sequence>
<organism>
    <name type="scientific">Cereibacter sphaeroides (strain ATCC 17023 / DSM 158 / JCM 6121 / CCUG 31486 / LMG 2827 / NBRC 12203 / NCIMB 8253 / ATH 2.4.1.)</name>
    <name type="common">Rhodobacter sphaeroides</name>
    <dbReference type="NCBI Taxonomy" id="272943"/>
    <lineage>
        <taxon>Bacteria</taxon>
        <taxon>Pseudomonadati</taxon>
        <taxon>Pseudomonadota</taxon>
        <taxon>Alphaproteobacteria</taxon>
        <taxon>Rhodobacterales</taxon>
        <taxon>Paracoccaceae</taxon>
        <taxon>Cereibacter</taxon>
    </lineage>
</organism>
<dbReference type="EC" id="6.1.1.7" evidence="1"/>
<dbReference type="EMBL" id="CP000143">
    <property type="protein sequence ID" value="ABA79623.1"/>
    <property type="molecule type" value="Genomic_DNA"/>
</dbReference>
<dbReference type="RefSeq" id="WP_011338234.1">
    <property type="nucleotide sequence ID" value="NC_007493.2"/>
</dbReference>
<dbReference type="RefSeq" id="YP_353524.1">
    <property type="nucleotide sequence ID" value="NC_007493.2"/>
</dbReference>
<dbReference type="SMR" id="Q3J0R1"/>
<dbReference type="STRING" id="272943.RSP_0451"/>
<dbReference type="EnsemblBacteria" id="ABA79623">
    <property type="protein sequence ID" value="ABA79623"/>
    <property type="gene ID" value="RSP_0451"/>
</dbReference>
<dbReference type="GeneID" id="3718824"/>
<dbReference type="KEGG" id="rsp:RSP_0451"/>
<dbReference type="PATRIC" id="fig|272943.9.peg.2400"/>
<dbReference type="eggNOG" id="COG0013">
    <property type="taxonomic scope" value="Bacteria"/>
</dbReference>
<dbReference type="OrthoDB" id="9803884at2"/>
<dbReference type="PhylomeDB" id="Q3J0R1"/>
<dbReference type="Proteomes" id="UP000002703">
    <property type="component" value="Chromosome 1"/>
</dbReference>
<dbReference type="GO" id="GO:0005829">
    <property type="term" value="C:cytosol"/>
    <property type="evidence" value="ECO:0007669"/>
    <property type="project" value="TreeGrafter"/>
</dbReference>
<dbReference type="GO" id="GO:0004813">
    <property type="term" value="F:alanine-tRNA ligase activity"/>
    <property type="evidence" value="ECO:0007669"/>
    <property type="project" value="UniProtKB-UniRule"/>
</dbReference>
<dbReference type="GO" id="GO:0002161">
    <property type="term" value="F:aminoacyl-tRNA deacylase activity"/>
    <property type="evidence" value="ECO:0007669"/>
    <property type="project" value="TreeGrafter"/>
</dbReference>
<dbReference type="GO" id="GO:0005524">
    <property type="term" value="F:ATP binding"/>
    <property type="evidence" value="ECO:0007669"/>
    <property type="project" value="UniProtKB-UniRule"/>
</dbReference>
<dbReference type="GO" id="GO:0000049">
    <property type="term" value="F:tRNA binding"/>
    <property type="evidence" value="ECO:0007669"/>
    <property type="project" value="UniProtKB-KW"/>
</dbReference>
<dbReference type="GO" id="GO:0008270">
    <property type="term" value="F:zinc ion binding"/>
    <property type="evidence" value="ECO:0007669"/>
    <property type="project" value="UniProtKB-UniRule"/>
</dbReference>
<dbReference type="GO" id="GO:0006419">
    <property type="term" value="P:alanyl-tRNA aminoacylation"/>
    <property type="evidence" value="ECO:0007669"/>
    <property type="project" value="UniProtKB-UniRule"/>
</dbReference>
<dbReference type="GO" id="GO:0045892">
    <property type="term" value="P:negative regulation of DNA-templated transcription"/>
    <property type="evidence" value="ECO:0007669"/>
    <property type="project" value="TreeGrafter"/>
</dbReference>
<dbReference type="CDD" id="cd00673">
    <property type="entry name" value="AlaRS_core"/>
    <property type="match status" value="1"/>
</dbReference>
<dbReference type="FunFam" id="2.40.30.130:FF:000001">
    <property type="entry name" value="Alanine--tRNA ligase"/>
    <property type="match status" value="1"/>
</dbReference>
<dbReference type="FunFam" id="3.10.310.40:FF:000001">
    <property type="entry name" value="Alanine--tRNA ligase"/>
    <property type="match status" value="1"/>
</dbReference>
<dbReference type="FunFam" id="3.30.54.20:FF:000001">
    <property type="entry name" value="Alanine--tRNA ligase"/>
    <property type="match status" value="1"/>
</dbReference>
<dbReference type="FunFam" id="3.30.930.10:FF:000004">
    <property type="entry name" value="Alanine--tRNA ligase"/>
    <property type="match status" value="1"/>
</dbReference>
<dbReference type="FunFam" id="3.30.980.10:FF:000004">
    <property type="entry name" value="Alanine--tRNA ligase, cytoplasmic"/>
    <property type="match status" value="1"/>
</dbReference>
<dbReference type="Gene3D" id="2.40.30.130">
    <property type="match status" value="1"/>
</dbReference>
<dbReference type="Gene3D" id="3.10.310.40">
    <property type="match status" value="1"/>
</dbReference>
<dbReference type="Gene3D" id="3.30.54.20">
    <property type="match status" value="1"/>
</dbReference>
<dbReference type="Gene3D" id="6.10.250.550">
    <property type="match status" value="1"/>
</dbReference>
<dbReference type="Gene3D" id="3.30.930.10">
    <property type="entry name" value="Bira Bifunctional Protein, Domain 2"/>
    <property type="match status" value="1"/>
</dbReference>
<dbReference type="Gene3D" id="3.30.980.10">
    <property type="entry name" value="Threonyl-trna Synthetase, Chain A, domain 2"/>
    <property type="match status" value="1"/>
</dbReference>
<dbReference type="HAMAP" id="MF_00036_B">
    <property type="entry name" value="Ala_tRNA_synth_B"/>
    <property type="match status" value="1"/>
</dbReference>
<dbReference type="InterPro" id="IPR045864">
    <property type="entry name" value="aa-tRNA-synth_II/BPL/LPL"/>
</dbReference>
<dbReference type="InterPro" id="IPR002318">
    <property type="entry name" value="Ala-tRNA-lgiase_IIc"/>
</dbReference>
<dbReference type="InterPro" id="IPR018162">
    <property type="entry name" value="Ala-tRNA-ligase_IIc_anticod-bd"/>
</dbReference>
<dbReference type="InterPro" id="IPR018165">
    <property type="entry name" value="Ala-tRNA-synth_IIc_core"/>
</dbReference>
<dbReference type="InterPro" id="IPR018164">
    <property type="entry name" value="Ala-tRNA-synth_IIc_N"/>
</dbReference>
<dbReference type="InterPro" id="IPR050058">
    <property type="entry name" value="Ala-tRNA_ligase"/>
</dbReference>
<dbReference type="InterPro" id="IPR023033">
    <property type="entry name" value="Ala_tRNA_ligase_euk/bac"/>
</dbReference>
<dbReference type="InterPro" id="IPR003156">
    <property type="entry name" value="DHHA1_dom"/>
</dbReference>
<dbReference type="InterPro" id="IPR018163">
    <property type="entry name" value="Thr/Ala-tRNA-synth_IIc_edit"/>
</dbReference>
<dbReference type="InterPro" id="IPR009000">
    <property type="entry name" value="Transl_B-barrel_sf"/>
</dbReference>
<dbReference type="InterPro" id="IPR012947">
    <property type="entry name" value="tRNA_SAD"/>
</dbReference>
<dbReference type="NCBIfam" id="TIGR00344">
    <property type="entry name" value="alaS"/>
    <property type="match status" value="1"/>
</dbReference>
<dbReference type="PANTHER" id="PTHR11777:SF9">
    <property type="entry name" value="ALANINE--TRNA LIGASE, CYTOPLASMIC"/>
    <property type="match status" value="1"/>
</dbReference>
<dbReference type="PANTHER" id="PTHR11777">
    <property type="entry name" value="ALANYL-TRNA SYNTHETASE"/>
    <property type="match status" value="1"/>
</dbReference>
<dbReference type="Pfam" id="PF02272">
    <property type="entry name" value="DHHA1"/>
    <property type="match status" value="1"/>
</dbReference>
<dbReference type="Pfam" id="PF01411">
    <property type="entry name" value="tRNA-synt_2c"/>
    <property type="match status" value="1"/>
</dbReference>
<dbReference type="Pfam" id="PF07973">
    <property type="entry name" value="tRNA_SAD"/>
    <property type="match status" value="1"/>
</dbReference>
<dbReference type="PRINTS" id="PR00980">
    <property type="entry name" value="TRNASYNTHALA"/>
</dbReference>
<dbReference type="SMART" id="SM00863">
    <property type="entry name" value="tRNA_SAD"/>
    <property type="match status" value="1"/>
</dbReference>
<dbReference type="SUPFAM" id="SSF55681">
    <property type="entry name" value="Class II aaRS and biotin synthetases"/>
    <property type="match status" value="1"/>
</dbReference>
<dbReference type="SUPFAM" id="SSF101353">
    <property type="entry name" value="Putative anticodon-binding domain of alanyl-tRNA synthetase (AlaRS)"/>
    <property type="match status" value="1"/>
</dbReference>
<dbReference type="SUPFAM" id="SSF55186">
    <property type="entry name" value="ThrRS/AlaRS common domain"/>
    <property type="match status" value="1"/>
</dbReference>
<dbReference type="SUPFAM" id="SSF50447">
    <property type="entry name" value="Translation proteins"/>
    <property type="match status" value="1"/>
</dbReference>
<dbReference type="PROSITE" id="PS50860">
    <property type="entry name" value="AA_TRNA_LIGASE_II_ALA"/>
    <property type="match status" value="1"/>
</dbReference>
<accession>Q3J0R1</accession>
<evidence type="ECO:0000255" key="1">
    <source>
        <dbReference type="HAMAP-Rule" id="MF_00036"/>
    </source>
</evidence>
<keyword id="KW-0030">Aminoacyl-tRNA synthetase</keyword>
<keyword id="KW-0067">ATP-binding</keyword>
<keyword id="KW-0963">Cytoplasm</keyword>
<keyword id="KW-0436">Ligase</keyword>
<keyword id="KW-0479">Metal-binding</keyword>
<keyword id="KW-0547">Nucleotide-binding</keyword>
<keyword id="KW-0648">Protein biosynthesis</keyword>
<keyword id="KW-1185">Reference proteome</keyword>
<keyword id="KW-0694">RNA-binding</keyword>
<keyword id="KW-0820">tRNA-binding</keyword>
<keyword id="KW-0862">Zinc</keyword>
<gene>
    <name evidence="1" type="primary">alaS</name>
    <name type="ordered locus">RHOS4_20550</name>
    <name type="ORF">RSP_0451</name>
</gene>
<feature type="chain" id="PRO_0000347752" description="Alanine--tRNA ligase">
    <location>
        <begin position="1"/>
        <end position="883"/>
    </location>
</feature>
<feature type="binding site" evidence="1">
    <location>
        <position position="563"/>
    </location>
    <ligand>
        <name>Zn(2+)</name>
        <dbReference type="ChEBI" id="CHEBI:29105"/>
    </ligand>
</feature>
<feature type="binding site" evidence="1">
    <location>
        <position position="567"/>
    </location>
    <ligand>
        <name>Zn(2+)</name>
        <dbReference type="ChEBI" id="CHEBI:29105"/>
    </ligand>
</feature>
<feature type="binding site" evidence="1">
    <location>
        <position position="677"/>
    </location>
    <ligand>
        <name>Zn(2+)</name>
        <dbReference type="ChEBI" id="CHEBI:29105"/>
    </ligand>
</feature>
<feature type="binding site" evidence="1">
    <location>
        <position position="681"/>
    </location>
    <ligand>
        <name>Zn(2+)</name>
        <dbReference type="ChEBI" id="CHEBI:29105"/>
    </ligand>
</feature>
<protein>
    <recommendedName>
        <fullName evidence="1">Alanine--tRNA ligase</fullName>
        <ecNumber evidence="1">6.1.1.7</ecNumber>
    </recommendedName>
    <alternativeName>
        <fullName evidence="1">Alanyl-tRNA synthetase</fullName>
        <shortName evidence="1">AlaRS</shortName>
    </alternativeName>
</protein>
<proteinExistence type="inferred from homology"/>
<name>SYA_CERS4</name>
<comment type="function">
    <text evidence="1">Catalyzes the attachment of alanine to tRNA(Ala) in a two-step reaction: alanine is first activated by ATP to form Ala-AMP and then transferred to the acceptor end of tRNA(Ala). Also edits incorrectly charged Ser-tRNA(Ala) and Gly-tRNA(Ala) via its editing domain.</text>
</comment>
<comment type="catalytic activity">
    <reaction evidence="1">
        <text>tRNA(Ala) + L-alanine + ATP = L-alanyl-tRNA(Ala) + AMP + diphosphate</text>
        <dbReference type="Rhea" id="RHEA:12540"/>
        <dbReference type="Rhea" id="RHEA-COMP:9657"/>
        <dbReference type="Rhea" id="RHEA-COMP:9923"/>
        <dbReference type="ChEBI" id="CHEBI:30616"/>
        <dbReference type="ChEBI" id="CHEBI:33019"/>
        <dbReference type="ChEBI" id="CHEBI:57972"/>
        <dbReference type="ChEBI" id="CHEBI:78442"/>
        <dbReference type="ChEBI" id="CHEBI:78497"/>
        <dbReference type="ChEBI" id="CHEBI:456215"/>
        <dbReference type="EC" id="6.1.1.7"/>
    </reaction>
</comment>
<comment type="cofactor">
    <cofactor evidence="1">
        <name>Zn(2+)</name>
        <dbReference type="ChEBI" id="CHEBI:29105"/>
    </cofactor>
    <text evidence="1">Binds 1 zinc ion per subunit.</text>
</comment>
<comment type="subcellular location">
    <subcellularLocation>
        <location evidence="1">Cytoplasm</location>
    </subcellularLocation>
</comment>
<comment type="domain">
    <text evidence="1">Consists of three domains; the N-terminal catalytic domain, the editing domain and the C-terminal C-Ala domain. The editing domain removes incorrectly charged amino acids, while the C-Ala domain, along with tRNA(Ala), serves as a bridge to cooperatively bring together the editing and aminoacylation centers thus stimulating deacylation of misacylated tRNAs.</text>
</comment>
<comment type="similarity">
    <text evidence="1">Belongs to the class-II aminoacyl-tRNA synthetase family.</text>
</comment>